<comment type="function">
    <text evidence="2">Forms the simplified baseplate, together with the p132 collar protein ring and the cone (DTP-pb9 and BHP-pb3).</text>
</comment>
<comment type="subunit">
    <text evidence="2">Homotrimer (PubMed:36961893). Forms a pseudo-hexameric ring (PubMed:36961893). Interacts with collar protein p132, DTP-pb9 and tail tube protein pb6 (PubMed:36961893).</text>
</comment>
<comment type="subcellular location">
    <subcellularLocation>
        <location evidence="1 2">Virion</location>
    </subcellularLocation>
    <text evidence="1 2">Component of the tail (PubMed:24198424, PubMed:36961893). Located between the first TTP-pb6 trimer and the DTP-pb9 hexamer, and surrounded by the p132 collar protein dodecamer (PubMed:36961893).</text>
</comment>
<keyword id="KW-0002">3D-structure</keyword>
<keyword id="KW-0426">Late protein</keyword>
<keyword id="KW-1185">Reference proteome</keyword>
<keyword id="KW-1227">Viral tail protein</keyword>
<keyword id="KW-0946">Virion</keyword>
<sequence length="298" mass="34337">MFYSLMRESKIVIEYDGRGYHFDALSNYDASTSFQEFKTLRRTIHNRTNYADSIINAQDPSSISLAINFSTTLIESNFFDWMGFTREGNSLFLPRNTPNIEPIMFNMYIINHNNSCIYFENCYVSTVDFSLDKSIPILNVGIESGKFSEVSTFRDGYTITQGEVLPYSAPAVYTNSSPLPALISASMSFQQQCSWREDRNIFDINKIYTNKRAYVNEMNASATLAFYYVKRLVGDKFLNLDPETRTPLIIKNKYVSITFPLARISKRLNFSDLYQVEYDVIPTADSDPVEINFFGERK</sequence>
<accession>Q6QGE3</accession>
<evidence type="ECO:0000269" key="1">
    <source>
    </source>
</evidence>
<evidence type="ECO:0000269" key="2">
    <source>
    </source>
</evidence>
<evidence type="ECO:0000303" key="3">
    <source>
    </source>
</evidence>
<evidence type="ECO:0000312" key="4">
    <source>
        <dbReference type="EMBL" id="AAS77183.1"/>
    </source>
</evidence>
<evidence type="ECO:0000312" key="5">
    <source>
        <dbReference type="EMBL" id="AAU05279.1"/>
    </source>
</evidence>
<evidence type="ECO:0000312" key="6">
    <source>
        <dbReference type="EMBL" id="AAX12070.1"/>
    </source>
</evidence>
<evidence type="ECO:0007744" key="7">
    <source>
        <dbReference type="PDB" id="7QG9"/>
    </source>
</evidence>
<evidence type="ECO:0007744" key="8">
    <source>
        <dbReference type="PDB" id="7ZHJ"/>
    </source>
</evidence>
<evidence type="ECO:0007744" key="9">
    <source>
        <dbReference type="PDB" id="7ZN2"/>
    </source>
</evidence>
<evidence type="ECO:0007744" key="10">
    <source>
        <dbReference type="PDB" id="7ZQB"/>
    </source>
</evidence>
<gene>
    <name type="ORF">ORF133</name>
    <name evidence="4" type="ORF">T5.144</name>
    <name evidence="5" type="ORF">T5p140</name>
</gene>
<protein>
    <recommendedName>
        <fullName evidence="3">Baseplate tube protein p140</fullName>
        <shortName evidence="3">p140</shortName>
    </recommendedName>
    <alternativeName>
        <fullName evidence="3">Minor tail protein p140</fullName>
    </alternativeName>
    <alternativeName>
        <fullName evidence="3">Tail protein p140</fullName>
    </alternativeName>
</protein>
<organism>
    <name type="scientific">Escherichia phage T5</name>
    <name type="common">Enterobacteria phage T5</name>
    <dbReference type="NCBI Taxonomy" id="2695836"/>
    <lineage>
        <taxon>Viruses</taxon>
        <taxon>Duplodnaviria</taxon>
        <taxon>Heunggongvirae</taxon>
        <taxon>Uroviricota</taxon>
        <taxon>Caudoviricetes</taxon>
        <taxon>Demerecviridae</taxon>
        <taxon>Markadamsvirinae</taxon>
        <taxon>Tequintavirus</taxon>
        <taxon>Tequintavirus T5</taxon>
    </lineage>
</organism>
<feature type="chain" id="PRO_0000432946" description="Baseplate tube protein p140">
    <location>
        <begin position="1"/>
        <end position="298"/>
    </location>
</feature>
<dbReference type="EMBL" id="AY543070">
    <property type="protein sequence ID" value="AAS77183.1"/>
    <property type="molecule type" value="Genomic_DNA"/>
</dbReference>
<dbReference type="EMBL" id="AY692264">
    <property type="protein sequence ID" value="AAU05279.1"/>
    <property type="molecule type" value="Genomic_DNA"/>
</dbReference>
<dbReference type="EMBL" id="AY587007">
    <property type="protein sequence ID" value="AAX12070.1"/>
    <property type="molecule type" value="Genomic_DNA"/>
</dbReference>
<dbReference type="RefSeq" id="YP_006972.1">
    <property type="nucleotide sequence ID" value="NC_005859.1"/>
</dbReference>
<dbReference type="PDB" id="7QG9">
    <property type="method" value="EM"/>
    <property type="resolution" value="3.45 A"/>
    <property type="chains" value="G/H/I=1-298"/>
</dbReference>
<dbReference type="PDB" id="7ZHJ">
    <property type="method" value="EM"/>
    <property type="resolution" value="3.53 A"/>
    <property type="chains" value="G/H/I=1-298"/>
</dbReference>
<dbReference type="PDB" id="7ZN2">
    <property type="method" value="EM"/>
    <property type="resolution" value="4.29 A"/>
    <property type="chains" value="G/H/I=1-298"/>
</dbReference>
<dbReference type="PDB" id="7ZQB">
    <property type="method" value="EM"/>
    <property type="resolution" value="3.88 A"/>
    <property type="chains" value="G/H/I=1-298"/>
</dbReference>
<dbReference type="PDB" id="9IOZ">
    <property type="method" value="EM"/>
    <property type="resolution" value="3.90 A"/>
    <property type="chains" value="A/B/C=1-298"/>
</dbReference>
<dbReference type="PDBsum" id="7QG9"/>
<dbReference type="PDBsum" id="7ZHJ"/>
<dbReference type="PDBsum" id="7ZN2"/>
<dbReference type="PDBsum" id="7ZQB"/>
<dbReference type="PDBsum" id="9IOZ"/>
<dbReference type="EMDB" id="EMD-13953"/>
<dbReference type="EMDB" id="EMD-14733"/>
<dbReference type="EMDB" id="EMD-14799"/>
<dbReference type="EMDB" id="EMD-14869"/>
<dbReference type="EMDB" id="EMD-60750"/>
<dbReference type="SMR" id="Q6QGE3"/>
<dbReference type="GeneID" id="2777633"/>
<dbReference type="KEGG" id="vg:2777633"/>
<dbReference type="Proteomes" id="UP000002107">
    <property type="component" value="Genome"/>
</dbReference>
<dbReference type="Proteomes" id="UP000002141">
    <property type="component" value="Segment"/>
</dbReference>
<dbReference type="Proteomes" id="UP000002503">
    <property type="component" value="Segment"/>
</dbReference>
<dbReference type="GO" id="GO:0098015">
    <property type="term" value="C:virus tail"/>
    <property type="evidence" value="ECO:0000314"/>
    <property type="project" value="UniProtKB"/>
</dbReference>
<dbReference type="InterPro" id="IPR056389">
    <property type="entry name" value="Baseplate_tube_p140"/>
</dbReference>
<dbReference type="Pfam" id="PF23779">
    <property type="entry name" value="Baseplate_Tube_p140"/>
    <property type="match status" value="1"/>
</dbReference>
<name>BP140_BPT5</name>
<organismHost>
    <name type="scientific">Escherichia coli</name>
    <dbReference type="NCBI Taxonomy" id="562"/>
</organismHost>
<proteinExistence type="evidence at protein level"/>
<reference key="1">
    <citation type="submission" date="2004-01" db="EMBL/GenBank/DDBJ databases">
        <title>Bacteriophage T5 complete genome.</title>
        <authorList>
            <person name="Ksenzenko V.N."/>
            <person name="Kaliman A.V."/>
            <person name="Krutilina A.I."/>
            <person name="Shlyapnikov M.G."/>
        </authorList>
    </citation>
    <scope>NUCLEOTIDE SEQUENCE [LARGE SCALE GENOMIC DNA]</scope>
</reference>
<reference key="2">
    <citation type="journal article" date="2005" name="Virology">
        <title>Complete genome sequence of bacteriophage T5.</title>
        <authorList>
            <person name="Wang J."/>
            <person name="Jiang Y."/>
            <person name="Vincent M."/>
            <person name="Sun Y."/>
            <person name="Yu H."/>
            <person name="Wang J."/>
            <person name="Bao Q."/>
            <person name="Kong H."/>
            <person name="Hu S."/>
        </authorList>
    </citation>
    <scope>NUCLEOTIDE SEQUENCE [LARGE SCALE GENOMIC DNA]</scope>
    <scope>INDUCTION</scope>
    <source>
        <strain evidence="6">ATCC 11303-B5</strain>
    </source>
</reference>
<reference key="3">
    <citation type="journal article" date="2014" name="J. Virol.">
        <title>Insights into bacteriophage T5 structure from analysis of its morphogenesis genes and protein components.</title>
        <authorList>
            <person name="Zivanovic Y."/>
            <person name="Confalonieri F."/>
            <person name="Ponchon L."/>
            <person name="Lurz R."/>
            <person name="Chami M."/>
            <person name="Flayhan A."/>
            <person name="Renouard M."/>
            <person name="Huet A."/>
            <person name="Decottignies P."/>
            <person name="Davidson A.R."/>
            <person name="Breyton C."/>
            <person name="Boulanger P."/>
        </authorList>
    </citation>
    <scope>NUCLEOTIDE SEQUENCE [LARGE SCALE GENOMIC DNA]</scope>
    <scope>SUBCELLULAR LOCATION</scope>
    <source>
        <strain>St0 deletion mutant</strain>
    </source>
</reference>
<reference evidence="7 8 9 10" key="4">
    <citation type="journal article" date="2023" name="Sci. Adv.">
        <title>Structural basis of bacteriophage T5 infection trigger and E. coli cell wall perforation.</title>
        <authorList>
            <person name="Linares R."/>
            <person name="Arnaud C.A."/>
            <person name="Effantin G."/>
            <person name="Darnault C."/>
            <person name="Epalle N.H."/>
            <person name="Boeri Erba E."/>
            <person name="Schoehn G."/>
            <person name="Breyton C."/>
        </authorList>
    </citation>
    <scope>STRUCTURE BY ELECTRON MICROSCOPY (3.45 ANGSTROMS)</scope>
    <scope>FUNCTION</scope>
    <scope>SUBCELLULAR LOCATION</scope>
    <scope>SUBUNIT</scope>
    <scope>INTERACTION WITH COLLAR PROTEIN P132</scope>
    <scope>INTERACTION WITH DTP-PB9</scope>
    <scope>INTERACTION WITH TAIL TUBE PROTEIN PB6</scope>
</reference>